<keyword id="KW-0249">Electron transport</keyword>
<keyword id="KW-0472">Membrane</keyword>
<keyword id="KW-0496">Mitochondrion</keyword>
<keyword id="KW-0999">Mitochondrion inner membrane</keyword>
<keyword id="KW-0520">NAD</keyword>
<keyword id="KW-0679">Respiratory chain</keyword>
<keyword id="KW-1278">Translocase</keyword>
<keyword id="KW-0812">Transmembrane</keyword>
<keyword id="KW-1133">Transmembrane helix</keyword>
<keyword id="KW-0813">Transport</keyword>
<keyword id="KW-0830">Ubiquinone</keyword>
<sequence length="98" mass="10771">MSLTYFNVMLAFTMSFLGLLMYRSHLMSSLLCLEGLMLSLFVLVTITILITHSTLNSMLPIILLVFAACEAALGLSLLVAVSNTYGLDHVQNLNLLKC</sequence>
<dbReference type="EC" id="7.1.1.2"/>
<dbReference type="EMBL" id="AB061528">
    <property type="protein sequence ID" value="BAB70652.1"/>
    <property type="molecule type" value="Genomic_DNA"/>
</dbReference>
<dbReference type="RefSeq" id="NP_976134.1">
    <property type="nucleotide sequence ID" value="NC_005436.1"/>
</dbReference>
<dbReference type="SMR" id="Q94YC5"/>
<dbReference type="GeneID" id="2746373"/>
<dbReference type="CTD" id="4539"/>
<dbReference type="GO" id="GO:0005743">
    <property type="term" value="C:mitochondrial inner membrane"/>
    <property type="evidence" value="ECO:0000250"/>
    <property type="project" value="UniProtKB"/>
</dbReference>
<dbReference type="GO" id="GO:0045271">
    <property type="term" value="C:respiratory chain complex I"/>
    <property type="evidence" value="ECO:0000250"/>
    <property type="project" value="UniProtKB"/>
</dbReference>
<dbReference type="GO" id="GO:0008137">
    <property type="term" value="F:NADH dehydrogenase (ubiquinone) activity"/>
    <property type="evidence" value="ECO:0000250"/>
    <property type="project" value="UniProtKB"/>
</dbReference>
<dbReference type="GO" id="GO:0042773">
    <property type="term" value="P:ATP synthesis coupled electron transport"/>
    <property type="evidence" value="ECO:0007669"/>
    <property type="project" value="InterPro"/>
</dbReference>
<dbReference type="FunFam" id="1.10.287.3510:FF:000002">
    <property type="entry name" value="NADH-ubiquinone oxidoreductase chain 4L"/>
    <property type="match status" value="1"/>
</dbReference>
<dbReference type="Gene3D" id="1.10.287.3510">
    <property type="match status" value="1"/>
</dbReference>
<dbReference type="InterPro" id="IPR001133">
    <property type="entry name" value="NADH_UbQ_OxRdtase_chain4L/K"/>
</dbReference>
<dbReference type="InterPro" id="IPR039428">
    <property type="entry name" value="NUOK/Mnh_C1-like"/>
</dbReference>
<dbReference type="PANTHER" id="PTHR11434:SF0">
    <property type="entry name" value="NADH-UBIQUINONE OXIDOREDUCTASE CHAIN 4L"/>
    <property type="match status" value="1"/>
</dbReference>
<dbReference type="PANTHER" id="PTHR11434">
    <property type="entry name" value="NADH-UBIQUINONE OXIDOREDUCTASE SUBUNIT ND4L"/>
    <property type="match status" value="1"/>
</dbReference>
<dbReference type="Pfam" id="PF00420">
    <property type="entry name" value="Oxidored_q2"/>
    <property type="match status" value="1"/>
</dbReference>
<accession>Q94YC5</accession>
<feature type="chain" id="PRO_0000275101" description="NADH-ubiquinone oxidoreductase chain 4L">
    <location>
        <begin position="1"/>
        <end position="98"/>
    </location>
</feature>
<feature type="transmembrane region" description="Helical" evidence="3">
    <location>
        <begin position="1"/>
        <end position="21"/>
    </location>
</feature>
<feature type="transmembrane region" description="Helical" evidence="3">
    <location>
        <begin position="30"/>
        <end position="50"/>
    </location>
</feature>
<feature type="transmembrane region" description="Helical" evidence="3">
    <location>
        <begin position="61"/>
        <end position="81"/>
    </location>
</feature>
<geneLocation type="mitochondrion"/>
<name>NU4LM_PIPAB</name>
<organism>
    <name type="scientific">Pipistrellus abramus</name>
    <name type="common">Japanese pipistrelle</name>
    <name type="synonym">Pipistrellus javanicus abramus</name>
    <dbReference type="NCBI Taxonomy" id="105295"/>
    <lineage>
        <taxon>Eukaryota</taxon>
        <taxon>Metazoa</taxon>
        <taxon>Chordata</taxon>
        <taxon>Craniata</taxon>
        <taxon>Vertebrata</taxon>
        <taxon>Euteleostomi</taxon>
        <taxon>Mammalia</taxon>
        <taxon>Eutheria</taxon>
        <taxon>Laurasiatheria</taxon>
        <taxon>Chiroptera</taxon>
        <taxon>Yangochiroptera</taxon>
        <taxon>Vespertilionidae</taxon>
        <taxon>Pipistrellus</taxon>
    </lineage>
</organism>
<proteinExistence type="inferred from homology"/>
<comment type="function">
    <text evidence="1">Core subunit of the mitochondrial membrane respiratory chain NADH dehydrogenase (Complex I) which catalyzes electron transfer from NADH through the respiratory chain, using ubiquinone as an electron acceptor. Part of the enzyme membrane arm which is embedded in the lipid bilayer and involved in proton translocation.</text>
</comment>
<comment type="catalytic activity">
    <reaction evidence="1">
        <text>a ubiquinone + NADH + 5 H(+)(in) = a ubiquinol + NAD(+) + 4 H(+)(out)</text>
        <dbReference type="Rhea" id="RHEA:29091"/>
        <dbReference type="Rhea" id="RHEA-COMP:9565"/>
        <dbReference type="Rhea" id="RHEA-COMP:9566"/>
        <dbReference type="ChEBI" id="CHEBI:15378"/>
        <dbReference type="ChEBI" id="CHEBI:16389"/>
        <dbReference type="ChEBI" id="CHEBI:17976"/>
        <dbReference type="ChEBI" id="CHEBI:57540"/>
        <dbReference type="ChEBI" id="CHEBI:57945"/>
        <dbReference type="EC" id="7.1.1.2"/>
    </reaction>
    <physiologicalReaction direction="left-to-right" evidence="1">
        <dbReference type="Rhea" id="RHEA:29092"/>
    </physiologicalReaction>
</comment>
<comment type="subunit">
    <text evidence="2">Core subunit of respiratory chain NADH dehydrogenase (Complex I) which is composed of 45 different subunits.</text>
</comment>
<comment type="subcellular location">
    <subcellularLocation>
        <location evidence="2">Mitochondrion inner membrane</location>
        <topology evidence="3">Multi-pass membrane protein</topology>
    </subcellularLocation>
</comment>
<comment type="similarity">
    <text evidence="4">Belongs to the complex I subunit 4L family.</text>
</comment>
<evidence type="ECO:0000250" key="1">
    <source>
        <dbReference type="UniProtKB" id="P03901"/>
    </source>
</evidence>
<evidence type="ECO:0000250" key="2">
    <source>
        <dbReference type="UniProtKB" id="P03902"/>
    </source>
</evidence>
<evidence type="ECO:0000255" key="3"/>
<evidence type="ECO:0000305" key="4"/>
<protein>
    <recommendedName>
        <fullName>NADH-ubiquinone oxidoreductase chain 4L</fullName>
        <ecNumber>7.1.1.2</ecNumber>
    </recommendedName>
    <alternativeName>
        <fullName>NADH dehydrogenase subunit 4L</fullName>
    </alternativeName>
</protein>
<gene>
    <name type="primary">MT-ND4L</name>
    <name type="synonym">MTND4L</name>
    <name type="synonym">NADH4L</name>
    <name type="synonym">ND4L</name>
</gene>
<reference key="1">
    <citation type="journal article" date="2001" name="J. Mol. Evol.">
        <title>Maximum likelihood analysis of the complete mitochondrial genomes of eutherians and a reevaluation of the phylogeny of bats and insectivores.</title>
        <authorList>
            <person name="Nikaido M."/>
            <person name="Kawai K."/>
            <person name="Cao Y."/>
            <person name="Harada M."/>
            <person name="Tomita S."/>
            <person name="Okada N."/>
            <person name="Hasegawa M."/>
        </authorList>
    </citation>
    <scope>NUCLEOTIDE SEQUENCE [GENOMIC DNA]</scope>
</reference>